<sequence>MASTISAYKEKMKELSVLSLICSCFYTQPHPNTIYQYGDMEVKQLDKRASGQSFEVILKSPSDLSPESPMLSSPPKKKDTSLEELQKRLEAAEERRKTQEAQVLKQLAERREHEREVLHKALEENNNFSRQAEEKLNYKMELSKEIREAHLAALRERLREKELHAAEVRRNKEQREEMSG</sequence>
<comment type="function">
    <text evidence="1">Exhibits microtubule-destabilizing activity, which is antagonized by STAT3.</text>
</comment>
<comment type="subunit">
    <text evidence="1 3">Interacts with STAT3. Interacts with CLU (secreted form); this interaction may act as an important modulator during neuronal differentiation (By similarity).</text>
</comment>
<comment type="subcellular location">
    <subcellularLocation>
        <location evidence="1">Golgi apparatus</location>
    </subcellularLocation>
    <subcellularLocation>
        <location evidence="1">Cell projection</location>
        <location evidence="1">Growth cone</location>
    </subcellularLocation>
    <subcellularLocation>
        <location evidence="1">Cell projection</location>
        <location evidence="1">Axon</location>
    </subcellularLocation>
    <subcellularLocation>
        <location evidence="3">Cytoplasm</location>
        <location evidence="3">Cytosol</location>
    </subcellularLocation>
</comment>
<comment type="PTM">
    <text evidence="1">N-terminal palmitoylation promotes specific anchoring to the cytosolic leaflet of Golgi membranes and subsequent vesicular trafficking along dendrites and axons. Neuronal Stathmins are substrates for palmitoyltransferases ZDHHC3, ZDHHC7 and ZDHHC15 (By similarity).</text>
</comment>
<comment type="similarity">
    <text evidence="7">Belongs to the stathmin family.</text>
</comment>
<evidence type="ECO:0000250" key="1"/>
<evidence type="ECO:0000250" key="2">
    <source>
        <dbReference type="UniProtKB" id="O70166"/>
    </source>
</evidence>
<evidence type="ECO:0000250" key="3">
    <source>
        <dbReference type="UniProtKB" id="Q9JHU6"/>
    </source>
</evidence>
<evidence type="ECO:0000255" key="4"/>
<evidence type="ECO:0000255" key="5">
    <source>
        <dbReference type="PROSITE-ProRule" id="PRU00998"/>
    </source>
</evidence>
<evidence type="ECO:0000256" key="6">
    <source>
        <dbReference type="SAM" id="MobiDB-lite"/>
    </source>
</evidence>
<evidence type="ECO:0000305" key="7"/>
<reference key="1">
    <citation type="submission" date="2005-06" db="EMBL/GenBank/DDBJ databases">
        <title>DNA sequences of macaque genes expressed in brain or testis and its evolutionary implications.</title>
        <authorList>
            <consortium name="International consortium for macaque cDNA sequencing and analysis"/>
        </authorList>
    </citation>
    <scope>NUCLEOTIDE SEQUENCE [LARGE SCALE MRNA]</scope>
    <source>
        <tissue>Brain cortex</tissue>
    </source>
</reference>
<organism>
    <name type="scientific">Macaca fascicularis</name>
    <name type="common">Crab-eating macaque</name>
    <name type="synonym">Cynomolgus monkey</name>
    <dbReference type="NCBI Taxonomy" id="9541"/>
    <lineage>
        <taxon>Eukaryota</taxon>
        <taxon>Metazoa</taxon>
        <taxon>Chordata</taxon>
        <taxon>Craniata</taxon>
        <taxon>Vertebrata</taxon>
        <taxon>Euteleostomi</taxon>
        <taxon>Mammalia</taxon>
        <taxon>Eutheria</taxon>
        <taxon>Euarchontoglires</taxon>
        <taxon>Primates</taxon>
        <taxon>Haplorrhini</taxon>
        <taxon>Catarrhini</taxon>
        <taxon>Cercopithecidae</taxon>
        <taxon>Cercopithecinae</taxon>
        <taxon>Macaca</taxon>
    </lineage>
</organism>
<feature type="chain" id="PRO_0000294077" description="Stathmin-3">
    <location>
        <begin position="1"/>
        <end position="180"/>
    </location>
</feature>
<feature type="domain" description="SLD" evidence="5">
    <location>
        <begin position="38"/>
        <end position="180"/>
    </location>
</feature>
<feature type="region of interest" description="Disordered" evidence="6">
    <location>
        <begin position="59"/>
        <end position="82"/>
    </location>
</feature>
<feature type="coiled-coil region" evidence="4">
    <location>
        <begin position="76"/>
        <end position="179"/>
    </location>
</feature>
<feature type="compositionally biased region" description="Low complexity" evidence="6">
    <location>
        <begin position="60"/>
        <end position="74"/>
    </location>
</feature>
<feature type="modified residue" description="Phosphoserine" evidence="2">
    <location>
        <position position="50"/>
    </location>
</feature>
<feature type="modified residue" description="Phosphoserine" evidence="2">
    <location>
        <position position="60"/>
    </location>
</feature>
<feature type="modified residue" description="Phosphoserine" evidence="2">
    <location>
        <position position="65"/>
    </location>
</feature>
<feature type="modified residue" description="Phosphoserine" evidence="2">
    <location>
        <position position="68"/>
    </location>
</feature>
<feature type="modified residue" description="Phosphoserine" evidence="2">
    <location>
        <position position="72"/>
    </location>
</feature>
<feature type="modified residue" description="Phosphoserine" evidence="2">
    <location>
        <position position="73"/>
    </location>
</feature>
<feature type="modified residue" description="Phosphoserine" evidence="3">
    <location>
        <position position="81"/>
    </location>
</feature>
<feature type="lipid moiety-binding region" description="S-palmitoyl cysteine" evidence="1">
    <location>
        <position position="22"/>
    </location>
</feature>
<feature type="lipid moiety-binding region" description="S-palmitoyl cysteine" evidence="1">
    <location>
        <position position="24"/>
    </location>
</feature>
<protein>
    <recommendedName>
        <fullName>Stathmin-3</fullName>
    </recommendedName>
</protein>
<keyword id="KW-0966">Cell projection</keyword>
<keyword id="KW-0175">Coiled coil</keyword>
<keyword id="KW-0963">Cytoplasm</keyword>
<keyword id="KW-0333">Golgi apparatus</keyword>
<keyword id="KW-0449">Lipoprotein</keyword>
<keyword id="KW-0564">Palmitate</keyword>
<keyword id="KW-0597">Phosphoprotein</keyword>
<keyword id="KW-1185">Reference proteome</keyword>
<proteinExistence type="evidence at transcript level"/>
<name>STMN3_MACFA</name>
<accession>Q4R4N5</accession>
<dbReference type="EMBL" id="AB169859">
    <property type="protein sequence ID" value="BAE01940.1"/>
    <property type="molecule type" value="mRNA"/>
</dbReference>
<dbReference type="RefSeq" id="NP_001270634.1">
    <property type="nucleotide sequence ID" value="NM_001283705.1"/>
</dbReference>
<dbReference type="RefSeq" id="XP_015313111.1">
    <property type="nucleotide sequence ID" value="XM_015457625.3"/>
</dbReference>
<dbReference type="SMR" id="Q4R4N5"/>
<dbReference type="STRING" id="9541.ENSMFAP00000025177"/>
<dbReference type="GeneID" id="101865045"/>
<dbReference type="KEGG" id="mcf:101865045"/>
<dbReference type="CTD" id="50861"/>
<dbReference type="VEuPathDB" id="HostDB:ENSMFAG00000044092"/>
<dbReference type="eggNOG" id="KOG1280">
    <property type="taxonomic scope" value="Eukaryota"/>
</dbReference>
<dbReference type="OMA" id="MPTAYKE"/>
<dbReference type="Proteomes" id="UP000233100">
    <property type="component" value="Chromosome 10"/>
</dbReference>
<dbReference type="GO" id="GO:0005829">
    <property type="term" value="C:cytosol"/>
    <property type="evidence" value="ECO:0000250"/>
    <property type="project" value="UniProtKB"/>
</dbReference>
<dbReference type="GO" id="GO:0005794">
    <property type="term" value="C:Golgi apparatus"/>
    <property type="evidence" value="ECO:0007669"/>
    <property type="project" value="UniProtKB-SubCell"/>
</dbReference>
<dbReference type="GO" id="GO:0030426">
    <property type="term" value="C:growth cone"/>
    <property type="evidence" value="ECO:0007669"/>
    <property type="project" value="UniProtKB-SubCell"/>
</dbReference>
<dbReference type="GO" id="GO:0015631">
    <property type="term" value="F:tubulin binding"/>
    <property type="evidence" value="ECO:0007669"/>
    <property type="project" value="TreeGrafter"/>
</dbReference>
<dbReference type="GO" id="GO:0007019">
    <property type="term" value="P:microtubule depolymerization"/>
    <property type="evidence" value="ECO:0007669"/>
    <property type="project" value="TreeGrafter"/>
</dbReference>
<dbReference type="GO" id="GO:0031175">
    <property type="term" value="P:neuron projection development"/>
    <property type="evidence" value="ECO:0007669"/>
    <property type="project" value="TreeGrafter"/>
</dbReference>
<dbReference type="GO" id="GO:0031110">
    <property type="term" value="P:regulation of microtubule polymerization or depolymerization"/>
    <property type="evidence" value="ECO:0007669"/>
    <property type="project" value="InterPro"/>
</dbReference>
<dbReference type="Gene3D" id="6.10.280.30">
    <property type="match status" value="1"/>
</dbReference>
<dbReference type="InterPro" id="IPR030514">
    <property type="entry name" value="Stathmin_CS"/>
</dbReference>
<dbReference type="InterPro" id="IPR000956">
    <property type="entry name" value="Stathmin_fam"/>
</dbReference>
<dbReference type="InterPro" id="IPR036002">
    <property type="entry name" value="Stathmin_sf"/>
</dbReference>
<dbReference type="PANTHER" id="PTHR10104">
    <property type="entry name" value="STATHMIN"/>
    <property type="match status" value="1"/>
</dbReference>
<dbReference type="PANTHER" id="PTHR10104:SF17">
    <property type="entry name" value="STATHMIN-3"/>
    <property type="match status" value="1"/>
</dbReference>
<dbReference type="Pfam" id="PF00836">
    <property type="entry name" value="Stathmin"/>
    <property type="match status" value="1"/>
</dbReference>
<dbReference type="PIRSF" id="PIRSF002285">
    <property type="entry name" value="Stathmin"/>
    <property type="match status" value="1"/>
</dbReference>
<dbReference type="PRINTS" id="PR00345">
    <property type="entry name" value="STATHMIN"/>
</dbReference>
<dbReference type="SUPFAM" id="SSF101494">
    <property type="entry name" value="Stathmin"/>
    <property type="match status" value="1"/>
</dbReference>
<dbReference type="PROSITE" id="PS00563">
    <property type="entry name" value="STATHMIN_1"/>
    <property type="match status" value="1"/>
</dbReference>
<dbReference type="PROSITE" id="PS01041">
    <property type="entry name" value="STATHMIN_2"/>
    <property type="match status" value="1"/>
</dbReference>
<dbReference type="PROSITE" id="PS51663">
    <property type="entry name" value="STATHMIN_3"/>
    <property type="match status" value="1"/>
</dbReference>
<gene>
    <name type="primary">STMN3</name>
    <name type="ORF">QccE-15529</name>
</gene>